<sequence>MTKFIFVTGGVVSSLGKGITAASLAAVLEARGLKVTMTKMDPYINVDPGTMSPFQHGEVFVTEDGAETDLDLGYYERFLRHSKMSKTNNFTSGRIYQTVLNKERRGDYLGGTVQVIPHITDEIKHRIHASGEGHDIAIIEIGGTVGDIESLPFMEAVRQMQVELGRNRAMLMHLTLVPYISSAGETKTKPTQHSVKELRSIGLQPDVLICRSEHAIGEENRRKIALFTNVEERAVITCEDADTIYQIPRTLYEQDLDDIICERFGIDAPEADLSDWDKVVDGLLNAQGKVTVAIVGKYVELPDAYKSINEALLHAGITHKTQVEIDYVDAEALETDDSLLARLEQADSILVPGGFGERGKLGKMRAIKFARENKMPYLGICLGMQLAVIEYATNVLGLEADSTEFNRKAAEPIIGLITEWLDEKGELQVRTDDSDLGGTMRLGSQKAELVEGSKLHQIYGAKLITERHRHRYEMNNRYIEPLEQAGMSISGYSAKQHLVESVEIADHPWFIGVQFHPEFTSSPREGHPLFASFVKAAIDHQNI</sequence>
<name>PYRG_PSYWF</name>
<evidence type="ECO:0000255" key="1">
    <source>
        <dbReference type="HAMAP-Rule" id="MF_01227"/>
    </source>
</evidence>
<dbReference type="EC" id="6.3.4.2" evidence="1"/>
<dbReference type="EMBL" id="CP000713">
    <property type="protein sequence ID" value="ABQ94610.1"/>
    <property type="molecule type" value="Genomic_DNA"/>
</dbReference>
<dbReference type="SMR" id="A5WG19"/>
<dbReference type="STRING" id="349106.PsycPRwf_1670"/>
<dbReference type="KEGG" id="prw:PsycPRwf_1670"/>
<dbReference type="eggNOG" id="COG0504">
    <property type="taxonomic scope" value="Bacteria"/>
</dbReference>
<dbReference type="HOGENOM" id="CLU_011675_5_0_6"/>
<dbReference type="UniPathway" id="UPA00159">
    <property type="reaction ID" value="UER00277"/>
</dbReference>
<dbReference type="GO" id="GO:0005829">
    <property type="term" value="C:cytosol"/>
    <property type="evidence" value="ECO:0007669"/>
    <property type="project" value="TreeGrafter"/>
</dbReference>
<dbReference type="GO" id="GO:0005524">
    <property type="term" value="F:ATP binding"/>
    <property type="evidence" value="ECO:0007669"/>
    <property type="project" value="UniProtKB-KW"/>
</dbReference>
<dbReference type="GO" id="GO:0003883">
    <property type="term" value="F:CTP synthase activity"/>
    <property type="evidence" value="ECO:0007669"/>
    <property type="project" value="UniProtKB-UniRule"/>
</dbReference>
<dbReference type="GO" id="GO:0004359">
    <property type="term" value="F:glutaminase activity"/>
    <property type="evidence" value="ECO:0007669"/>
    <property type="project" value="RHEA"/>
</dbReference>
<dbReference type="GO" id="GO:0042802">
    <property type="term" value="F:identical protein binding"/>
    <property type="evidence" value="ECO:0007669"/>
    <property type="project" value="TreeGrafter"/>
</dbReference>
<dbReference type="GO" id="GO:0046872">
    <property type="term" value="F:metal ion binding"/>
    <property type="evidence" value="ECO:0007669"/>
    <property type="project" value="UniProtKB-KW"/>
</dbReference>
<dbReference type="GO" id="GO:0044210">
    <property type="term" value="P:'de novo' CTP biosynthetic process"/>
    <property type="evidence" value="ECO:0007669"/>
    <property type="project" value="UniProtKB-UniRule"/>
</dbReference>
<dbReference type="GO" id="GO:0019856">
    <property type="term" value="P:pyrimidine nucleobase biosynthetic process"/>
    <property type="evidence" value="ECO:0007669"/>
    <property type="project" value="TreeGrafter"/>
</dbReference>
<dbReference type="CDD" id="cd03113">
    <property type="entry name" value="CTPS_N"/>
    <property type="match status" value="1"/>
</dbReference>
<dbReference type="CDD" id="cd01746">
    <property type="entry name" value="GATase1_CTP_Synthase"/>
    <property type="match status" value="1"/>
</dbReference>
<dbReference type="FunFam" id="3.40.50.300:FF:000009">
    <property type="entry name" value="CTP synthase"/>
    <property type="match status" value="1"/>
</dbReference>
<dbReference type="FunFam" id="3.40.50.880:FF:000002">
    <property type="entry name" value="CTP synthase"/>
    <property type="match status" value="1"/>
</dbReference>
<dbReference type="Gene3D" id="3.40.50.880">
    <property type="match status" value="1"/>
</dbReference>
<dbReference type="Gene3D" id="3.40.50.300">
    <property type="entry name" value="P-loop containing nucleotide triphosphate hydrolases"/>
    <property type="match status" value="1"/>
</dbReference>
<dbReference type="HAMAP" id="MF_01227">
    <property type="entry name" value="PyrG"/>
    <property type="match status" value="1"/>
</dbReference>
<dbReference type="InterPro" id="IPR029062">
    <property type="entry name" value="Class_I_gatase-like"/>
</dbReference>
<dbReference type="InterPro" id="IPR004468">
    <property type="entry name" value="CTP_synthase"/>
</dbReference>
<dbReference type="InterPro" id="IPR017456">
    <property type="entry name" value="CTP_synthase_N"/>
</dbReference>
<dbReference type="InterPro" id="IPR017926">
    <property type="entry name" value="GATASE"/>
</dbReference>
<dbReference type="InterPro" id="IPR033828">
    <property type="entry name" value="GATase1_CTP_Synthase"/>
</dbReference>
<dbReference type="InterPro" id="IPR027417">
    <property type="entry name" value="P-loop_NTPase"/>
</dbReference>
<dbReference type="NCBIfam" id="NF003792">
    <property type="entry name" value="PRK05380.1"/>
    <property type="match status" value="1"/>
</dbReference>
<dbReference type="NCBIfam" id="TIGR00337">
    <property type="entry name" value="PyrG"/>
    <property type="match status" value="1"/>
</dbReference>
<dbReference type="PANTHER" id="PTHR11550">
    <property type="entry name" value="CTP SYNTHASE"/>
    <property type="match status" value="1"/>
</dbReference>
<dbReference type="PANTHER" id="PTHR11550:SF0">
    <property type="entry name" value="CTP SYNTHASE-RELATED"/>
    <property type="match status" value="1"/>
</dbReference>
<dbReference type="Pfam" id="PF06418">
    <property type="entry name" value="CTP_synth_N"/>
    <property type="match status" value="1"/>
</dbReference>
<dbReference type="Pfam" id="PF00117">
    <property type="entry name" value="GATase"/>
    <property type="match status" value="1"/>
</dbReference>
<dbReference type="SUPFAM" id="SSF52317">
    <property type="entry name" value="Class I glutamine amidotransferase-like"/>
    <property type="match status" value="1"/>
</dbReference>
<dbReference type="SUPFAM" id="SSF52540">
    <property type="entry name" value="P-loop containing nucleoside triphosphate hydrolases"/>
    <property type="match status" value="1"/>
</dbReference>
<dbReference type="PROSITE" id="PS51273">
    <property type="entry name" value="GATASE_TYPE_1"/>
    <property type="match status" value="1"/>
</dbReference>
<organism>
    <name type="scientific">Psychrobacter sp. (strain PRwf-1)</name>
    <dbReference type="NCBI Taxonomy" id="349106"/>
    <lineage>
        <taxon>Bacteria</taxon>
        <taxon>Pseudomonadati</taxon>
        <taxon>Pseudomonadota</taxon>
        <taxon>Gammaproteobacteria</taxon>
        <taxon>Moraxellales</taxon>
        <taxon>Moraxellaceae</taxon>
        <taxon>Psychrobacter</taxon>
    </lineage>
</organism>
<proteinExistence type="inferred from homology"/>
<gene>
    <name evidence="1" type="primary">pyrG</name>
    <name type="ordered locus">PsycPRwf_1670</name>
</gene>
<comment type="function">
    <text evidence="1">Catalyzes the ATP-dependent amination of UTP to CTP with either L-glutamine or ammonia as the source of nitrogen. Regulates intracellular CTP levels through interactions with the four ribonucleotide triphosphates.</text>
</comment>
<comment type="catalytic activity">
    <reaction evidence="1">
        <text>UTP + L-glutamine + ATP + H2O = CTP + L-glutamate + ADP + phosphate + 2 H(+)</text>
        <dbReference type="Rhea" id="RHEA:26426"/>
        <dbReference type="ChEBI" id="CHEBI:15377"/>
        <dbReference type="ChEBI" id="CHEBI:15378"/>
        <dbReference type="ChEBI" id="CHEBI:29985"/>
        <dbReference type="ChEBI" id="CHEBI:30616"/>
        <dbReference type="ChEBI" id="CHEBI:37563"/>
        <dbReference type="ChEBI" id="CHEBI:43474"/>
        <dbReference type="ChEBI" id="CHEBI:46398"/>
        <dbReference type="ChEBI" id="CHEBI:58359"/>
        <dbReference type="ChEBI" id="CHEBI:456216"/>
        <dbReference type="EC" id="6.3.4.2"/>
    </reaction>
</comment>
<comment type="catalytic activity">
    <reaction evidence="1">
        <text>L-glutamine + H2O = L-glutamate + NH4(+)</text>
        <dbReference type="Rhea" id="RHEA:15889"/>
        <dbReference type="ChEBI" id="CHEBI:15377"/>
        <dbReference type="ChEBI" id="CHEBI:28938"/>
        <dbReference type="ChEBI" id="CHEBI:29985"/>
        <dbReference type="ChEBI" id="CHEBI:58359"/>
    </reaction>
</comment>
<comment type="catalytic activity">
    <reaction evidence="1">
        <text>UTP + NH4(+) + ATP = CTP + ADP + phosphate + 2 H(+)</text>
        <dbReference type="Rhea" id="RHEA:16597"/>
        <dbReference type="ChEBI" id="CHEBI:15378"/>
        <dbReference type="ChEBI" id="CHEBI:28938"/>
        <dbReference type="ChEBI" id="CHEBI:30616"/>
        <dbReference type="ChEBI" id="CHEBI:37563"/>
        <dbReference type="ChEBI" id="CHEBI:43474"/>
        <dbReference type="ChEBI" id="CHEBI:46398"/>
        <dbReference type="ChEBI" id="CHEBI:456216"/>
    </reaction>
</comment>
<comment type="activity regulation">
    <text evidence="1">Allosterically activated by GTP, when glutamine is the substrate; GTP has no effect on the reaction when ammonia is the substrate. The allosteric effector GTP functions by stabilizing the protein conformation that binds the tetrahedral intermediate(s) formed during glutamine hydrolysis. Inhibited by the product CTP, via allosteric rather than competitive inhibition.</text>
</comment>
<comment type="pathway">
    <text evidence="1">Pyrimidine metabolism; CTP biosynthesis via de novo pathway; CTP from UDP: step 2/2.</text>
</comment>
<comment type="subunit">
    <text evidence="1">Homotetramer.</text>
</comment>
<comment type="miscellaneous">
    <text evidence="1">CTPSs have evolved a hybrid strategy for distinguishing between UTP and CTP. The overlapping regions of the product feedback inhibitory and substrate sites recognize a common feature in both compounds, the triphosphate moiety. To differentiate isosteric substrate and product pyrimidine rings, an additional pocket far from the expected kinase/ligase catalytic site, specifically recognizes the cytosine and ribose portions of the product inhibitor.</text>
</comment>
<comment type="similarity">
    <text evidence="1">Belongs to the CTP synthase family.</text>
</comment>
<protein>
    <recommendedName>
        <fullName evidence="1">CTP synthase</fullName>
        <ecNumber evidence="1">6.3.4.2</ecNumber>
    </recommendedName>
    <alternativeName>
        <fullName evidence="1">Cytidine 5'-triphosphate synthase</fullName>
    </alternativeName>
    <alternativeName>
        <fullName evidence="1">Cytidine triphosphate synthetase</fullName>
        <shortName evidence="1">CTP synthetase</shortName>
        <shortName evidence="1">CTPS</shortName>
    </alternativeName>
    <alternativeName>
        <fullName evidence="1">UTP--ammonia ligase</fullName>
    </alternativeName>
</protein>
<keyword id="KW-0067">ATP-binding</keyword>
<keyword id="KW-0315">Glutamine amidotransferase</keyword>
<keyword id="KW-0436">Ligase</keyword>
<keyword id="KW-0460">Magnesium</keyword>
<keyword id="KW-0479">Metal-binding</keyword>
<keyword id="KW-0547">Nucleotide-binding</keyword>
<keyword id="KW-0665">Pyrimidine biosynthesis</keyword>
<reference key="1">
    <citation type="submission" date="2007-05" db="EMBL/GenBank/DDBJ databases">
        <title>Complete sequence of chromosome of Psychrobacter sp. PRwf-1.</title>
        <authorList>
            <consortium name="US DOE Joint Genome Institute"/>
            <person name="Copeland A."/>
            <person name="Lucas S."/>
            <person name="Lapidus A."/>
            <person name="Barry K."/>
            <person name="Detter J.C."/>
            <person name="Glavina del Rio T."/>
            <person name="Hammon N."/>
            <person name="Israni S."/>
            <person name="Dalin E."/>
            <person name="Tice H."/>
            <person name="Pitluck S."/>
            <person name="Chain P."/>
            <person name="Malfatti S."/>
            <person name="Shin M."/>
            <person name="Vergez L."/>
            <person name="Schmutz J."/>
            <person name="Larimer F."/>
            <person name="Land M."/>
            <person name="Hauser L."/>
            <person name="Kyrpides N."/>
            <person name="Kim E."/>
            <person name="Tiedje J."/>
            <person name="Richardson P."/>
        </authorList>
    </citation>
    <scope>NUCLEOTIDE SEQUENCE [LARGE SCALE GENOMIC DNA]</scope>
    <source>
        <strain>PRwf-1</strain>
    </source>
</reference>
<feature type="chain" id="PRO_1000139540" description="CTP synthase">
    <location>
        <begin position="1"/>
        <end position="543"/>
    </location>
</feature>
<feature type="domain" description="Glutamine amidotransferase type-1" evidence="1">
    <location>
        <begin position="291"/>
        <end position="543"/>
    </location>
</feature>
<feature type="region of interest" description="Amidoligase domain" evidence="1">
    <location>
        <begin position="1"/>
        <end position="266"/>
    </location>
</feature>
<feature type="active site" description="Nucleophile; for glutamine hydrolysis" evidence="1">
    <location>
        <position position="381"/>
    </location>
</feature>
<feature type="active site" evidence="1">
    <location>
        <position position="516"/>
    </location>
</feature>
<feature type="active site" evidence="1">
    <location>
        <position position="518"/>
    </location>
</feature>
<feature type="binding site" evidence="1">
    <location>
        <position position="13"/>
    </location>
    <ligand>
        <name>CTP</name>
        <dbReference type="ChEBI" id="CHEBI:37563"/>
        <note>allosteric inhibitor</note>
    </ligand>
</feature>
<feature type="binding site" evidence="1">
    <location>
        <position position="13"/>
    </location>
    <ligand>
        <name>UTP</name>
        <dbReference type="ChEBI" id="CHEBI:46398"/>
    </ligand>
</feature>
<feature type="binding site" evidence="1">
    <location>
        <begin position="14"/>
        <end position="19"/>
    </location>
    <ligand>
        <name>ATP</name>
        <dbReference type="ChEBI" id="CHEBI:30616"/>
    </ligand>
</feature>
<feature type="binding site" evidence="1">
    <location>
        <position position="71"/>
    </location>
    <ligand>
        <name>ATP</name>
        <dbReference type="ChEBI" id="CHEBI:30616"/>
    </ligand>
</feature>
<feature type="binding site" evidence="1">
    <location>
        <position position="71"/>
    </location>
    <ligand>
        <name>Mg(2+)</name>
        <dbReference type="ChEBI" id="CHEBI:18420"/>
    </ligand>
</feature>
<feature type="binding site" evidence="1">
    <location>
        <position position="140"/>
    </location>
    <ligand>
        <name>Mg(2+)</name>
        <dbReference type="ChEBI" id="CHEBI:18420"/>
    </ligand>
</feature>
<feature type="binding site" evidence="1">
    <location>
        <begin position="147"/>
        <end position="149"/>
    </location>
    <ligand>
        <name>CTP</name>
        <dbReference type="ChEBI" id="CHEBI:37563"/>
        <note>allosteric inhibitor</note>
    </ligand>
</feature>
<feature type="binding site" evidence="1">
    <location>
        <begin position="187"/>
        <end position="192"/>
    </location>
    <ligand>
        <name>CTP</name>
        <dbReference type="ChEBI" id="CHEBI:37563"/>
        <note>allosteric inhibitor</note>
    </ligand>
</feature>
<feature type="binding site" evidence="1">
    <location>
        <begin position="187"/>
        <end position="192"/>
    </location>
    <ligand>
        <name>UTP</name>
        <dbReference type="ChEBI" id="CHEBI:46398"/>
    </ligand>
</feature>
<feature type="binding site" evidence="1">
    <location>
        <position position="223"/>
    </location>
    <ligand>
        <name>CTP</name>
        <dbReference type="ChEBI" id="CHEBI:37563"/>
        <note>allosteric inhibitor</note>
    </ligand>
</feature>
<feature type="binding site" evidence="1">
    <location>
        <position position="223"/>
    </location>
    <ligand>
        <name>UTP</name>
        <dbReference type="ChEBI" id="CHEBI:46398"/>
    </ligand>
</feature>
<feature type="binding site" evidence="1">
    <location>
        <position position="354"/>
    </location>
    <ligand>
        <name>L-glutamine</name>
        <dbReference type="ChEBI" id="CHEBI:58359"/>
    </ligand>
</feature>
<feature type="binding site" evidence="1">
    <location>
        <begin position="382"/>
        <end position="385"/>
    </location>
    <ligand>
        <name>L-glutamine</name>
        <dbReference type="ChEBI" id="CHEBI:58359"/>
    </ligand>
</feature>
<feature type="binding site" evidence="1">
    <location>
        <position position="404"/>
    </location>
    <ligand>
        <name>L-glutamine</name>
        <dbReference type="ChEBI" id="CHEBI:58359"/>
    </ligand>
</feature>
<feature type="binding site" evidence="1">
    <location>
        <position position="471"/>
    </location>
    <ligand>
        <name>L-glutamine</name>
        <dbReference type="ChEBI" id="CHEBI:58359"/>
    </ligand>
</feature>
<accession>A5WG19</accession>